<protein>
    <recommendedName>
        <fullName>ABC transporter B family member 3</fullName>
        <shortName>ABC transporter ABCB.3</shortName>
        <shortName>AtABCB3</shortName>
    </recommendedName>
    <alternativeName>
        <fullName>P-glycoprotein 3</fullName>
    </alternativeName>
    <alternativeName>
        <fullName>Putative multidrug resistance protein 3</fullName>
    </alternativeName>
</protein>
<reference key="1">
    <citation type="submission" date="1997-12" db="EMBL/GenBank/DDBJ databases">
        <authorList>
            <person name="Sidler M."/>
            <person name="Dudler R."/>
        </authorList>
    </citation>
    <scope>NUCLEOTIDE SEQUENCE [GENOMIC DNA]</scope>
    <source>
        <strain>cv. Columbia</strain>
    </source>
</reference>
<reference key="2">
    <citation type="journal article" date="1999" name="Nature">
        <title>Sequence and analysis of chromosome 4 of the plant Arabidopsis thaliana.</title>
        <authorList>
            <person name="Mayer K.F.X."/>
            <person name="Schueller C."/>
            <person name="Wambutt R."/>
            <person name="Murphy G."/>
            <person name="Volckaert G."/>
            <person name="Pohl T."/>
            <person name="Duesterhoeft A."/>
            <person name="Stiekema W."/>
            <person name="Entian K.-D."/>
            <person name="Terryn N."/>
            <person name="Harris B."/>
            <person name="Ansorge W."/>
            <person name="Brandt P."/>
            <person name="Grivell L.A."/>
            <person name="Rieger M."/>
            <person name="Weichselgartner M."/>
            <person name="de Simone V."/>
            <person name="Obermaier B."/>
            <person name="Mache R."/>
            <person name="Mueller M."/>
            <person name="Kreis M."/>
            <person name="Delseny M."/>
            <person name="Puigdomenech P."/>
            <person name="Watson M."/>
            <person name="Schmidtheini T."/>
            <person name="Reichert B."/>
            <person name="Portetelle D."/>
            <person name="Perez-Alonso M."/>
            <person name="Boutry M."/>
            <person name="Bancroft I."/>
            <person name="Vos P."/>
            <person name="Hoheisel J."/>
            <person name="Zimmermann W."/>
            <person name="Wedler H."/>
            <person name="Ridley P."/>
            <person name="Langham S.-A."/>
            <person name="McCullagh B."/>
            <person name="Bilham L."/>
            <person name="Robben J."/>
            <person name="van der Schueren J."/>
            <person name="Grymonprez B."/>
            <person name="Chuang Y.-J."/>
            <person name="Vandenbussche F."/>
            <person name="Braeken M."/>
            <person name="Weltjens I."/>
            <person name="Voet M."/>
            <person name="Bastiaens I."/>
            <person name="Aert R."/>
            <person name="Defoor E."/>
            <person name="Weitzenegger T."/>
            <person name="Bothe G."/>
            <person name="Ramsperger U."/>
            <person name="Hilbert H."/>
            <person name="Braun M."/>
            <person name="Holzer E."/>
            <person name="Brandt A."/>
            <person name="Peters S."/>
            <person name="van Staveren M."/>
            <person name="Dirkse W."/>
            <person name="Mooijman P."/>
            <person name="Klein Lankhorst R."/>
            <person name="Rose M."/>
            <person name="Hauf J."/>
            <person name="Koetter P."/>
            <person name="Berneiser S."/>
            <person name="Hempel S."/>
            <person name="Feldpausch M."/>
            <person name="Lamberth S."/>
            <person name="Van den Daele H."/>
            <person name="De Keyser A."/>
            <person name="Buysshaert C."/>
            <person name="Gielen J."/>
            <person name="Villarroel R."/>
            <person name="De Clercq R."/>
            <person name="van Montagu M."/>
            <person name="Rogers J."/>
            <person name="Cronin A."/>
            <person name="Quail M.A."/>
            <person name="Bray-Allen S."/>
            <person name="Clark L."/>
            <person name="Doggett J."/>
            <person name="Hall S."/>
            <person name="Kay M."/>
            <person name="Lennard N."/>
            <person name="McLay K."/>
            <person name="Mayes R."/>
            <person name="Pettett A."/>
            <person name="Rajandream M.A."/>
            <person name="Lyne M."/>
            <person name="Benes V."/>
            <person name="Rechmann S."/>
            <person name="Borkova D."/>
            <person name="Bloecker H."/>
            <person name="Scharfe M."/>
            <person name="Grimm M."/>
            <person name="Loehnert T.-H."/>
            <person name="Dose S."/>
            <person name="de Haan M."/>
            <person name="Maarse A.C."/>
            <person name="Schaefer M."/>
            <person name="Mueller-Auer S."/>
            <person name="Gabel C."/>
            <person name="Fuchs M."/>
            <person name="Fartmann B."/>
            <person name="Granderath K."/>
            <person name="Dauner D."/>
            <person name="Herzl A."/>
            <person name="Neumann S."/>
            <person name="Argiriou A."/>
            <person name="Vitale D."/>
            <person name="Liguori R."/>
            <person name="Piravandi E."/>
            <person name="Massenet O."/>
            <person name="Quigley F."/>
            <person name="Clabauld G."/>
            <person name="Muendlein A."/>
            <person name="Felber R."/>
            <person name="Schnabl S."/>
            <person name="Hiller R."/>
            <person name="Schmidt W."/>
            <person name="Lecharny A."/>
            <person name="Aubourg S."/>
            <person name="Chefdor F."/>
            <person name="Cooke R."/>
            <person name="Berger C."/>
            <person name="Monfort A."/>
            <person name="Casacuberta E."/>
            <person name="Gibbons T."/>
            <person name="Weber N."/>
            <person name="Vandenbol M."/>
            <person name="Bargues M."/>
            <person name="Terol J."/>
            <person name="Torres A."/>
            <person name="Perez-Perez A."/>
            <person name="Purnelle B."/>
            <person name="Bent E."/>
            <person name="Johnson S."/>
            <person name="Tacon D."/>
            <person name="Jesse T."/>
            <person name="Heijnen L."/>
            <person name="Schwarz S."/>
            <person name="Scholler P."/>
            <person name="Heber S."/>
            <person name="Francs P."/>
            <person name="Bielke C."/>
            <person name="Frishman D."/>
            <person name="Haase D."/>
            <person name="Lemcke K."/>
            <person name="Mewes H.-W."/>
            <person name="Stocker S."/>
            <person name="Zaccaria P."/>
            <person name="Bevan M."/>
            <person name="Wilson R.K."/>
            <person name="de la Bastide M."/>
            <person name="Habermann K."/>
            <person name="Parnell L."/>
            <person name="Dedhia N."/>
            <person name="Gnoj L."/>
            <person name="Schutz K."/>
            <person name="Huang E."/>
            <person name="Spiegel L."/>
            <person name="Sekhon M."/>
            <person name="Murray J."/>
            <person name="Sheet P."/>
            <person name="Cordes M."/>
            <person name="Abu-Threideh J."/>
            <person name="Stoneking T."/>
            <person name="Kalicki J."/>
            <person name="Graves T."/>
            <person name="Harmon G."/>
            <person name="Edwards J."/>
            <person name="Latreille P."/>
            <person name="Courtney L."/>
            <person name="Cloud J."/>
            <person name="Abbott A."/>
            <person name="Scott K."/>
            <person name="Johnson D."/>
            <person name="Minx P."/>
            <person name="Bentley D."/>
            <person name="Fulton B."/>
            <person name="Miller N."/>
            <person name="Greco T."/>
            <person name="Kemp K."/>
            <person name="Kramer J."/>
            <person name="Fulton L."/>
            <person name="Mardis E."/>
            <person name="Dante M."/>
            <person name="Pepin K."/>
            <person name="Hillier L.W."/>
            <person name="Nelson J."/>
            <person name="Spieth J."/>
            <person name="Ryan E."/>
            <person name="Andrews S."/>
            <person name="Geisel C."/>
            <person name="Layman D."/>
            <person name="Du H."/>
            <person name="Ali J."/>
            <person name="Berghoff A."/>
            <person name="Jones K."/>
            <person name="Drone K."/>
            <person name="Cotton M."/>
            <person name="Joshu C."/>
            <person name="Antonoiu B."/>
            <person name="Zidanic M."/>
            <person name="Strong C."/>
            <person name="Sun H."/>
            <person name="Lamar B."/>
            <person name="Yordan C."/>
            <person name="Ma P."/>
            <person name="Zhong J."/>
            <person name="Preston R."/>
            <person name="Vil D."/>
            <person name="Shekher M."/>
            <person name="Matero A."/>
            <person name="Shah R."/>
            <person name="Swaby I.K."/>
            <person name="O'Shaughnessy A."/>
            <person name="Rodriguez M."/>
            <person name="Hoffman J."/>
            <person name="Till S."/>
            <person name="Granat S."/>
            <person name="Shohdy N."/>
            <person name="Hasegawa A."/>
            <person name="Hameed A."/>
            <person name="Lodhi M."/>
            <person name="Johnson A."/>
            <person name="Chen E."/>
            <person name="Marra M.A."/>
            <person name="Martienssen R."/>
            <person name="McCombie W.R."/>
        </authorList>
    </citation>
    <scope>NUCLEOTIDE SEQUENCE [LARGE SCALE GENOMIC DNA]</scope>
    <source>
        <strain>cv. Columbia</strain>
    </source>
</reference>
<reference key="3">
    <citation type="journal article" date="2017" name="Plant J.">
        <title>Araport11: a complete reannotation of the Arabidopsis thaliana reference genome.</title>
        <authorList>
            <person name="Cheng C.Y."/>
            <person name="Krishnakumar V."/>
            <person name="Chan A.P."/>
            <person name="Thibaud-Nissen F."/>
            <person name="Schobel S."/>
            <person name="Town C.D."/>
        </authorList>
    </citation>
    <scope>GENOME REANNOTATION</scope>
    <source>
        <strain>cv. Columbia</strain>
    </source>
</reference>
<reference key="4">
    <citation type="journal article" date="2001" name="J. Biol. Chem.">
        <title>The Arabidopsis thaliana ABC protein superfamily, a complete inventory.</title>
        <authorList>
            <person name="Sanchez-Fernandez R."/>
            <person name="Davies T.G."/>
            <person name="Coleman J.O."/>
            <person name="Rea P.A."/>
        </authorList>
    </citation>
    <scope>GENE FAMILY</scope>
    <scope>NOMENCLATURE</scope>
</reference>
<reference key="5">
    <citation type="journal article" date="2008" name="Trends Plant Sci.">
        <title>Plant ABC proteins - a unified nomenclature and updated inventory.</title>
        <authorList>
            <person name="Verrier P.J."/>
            <person name="Bird D."/>
            <person name="Burla B."/>
            <person name="Dassa E."/>
            <person name="Forestier C."/>
            <person name="Geisler M."/>
            <person name="Klein M."/>
            <person name="Kolukisaoglu H.U."/>
            <person name="Lee Y."/>
            <person name="Martinoia E."/>
            <person name="Murphy A."/>
            <person name="Rea P.A."/>
            <person name="Samuels L."/>
            <person name="Schulz B."/>
            <person name="Spalding E.J."/>
            <person name="Yazaki K."/>
            <person name="Theodoulou F.L."/>
        </authorList>
    </citation>
    <scope>GENE FAMILY</scope>
    <scope>NOMENCLATURE</scope>
</reference>
<organism>
    <name type="scientific">Arabidopsis thaliana</name>
    <name type="common">Mouse-ear cress</name>
    <dbReference type="NCBI Taxonomy" id="3702"/>
    <lineage>
        <taxon>Eukaryota</taxon>
        <taxon>Viridiplantae</taxon>
        <taxon>Streptophyta</taxon>
        <taxon>Embryophyta</taxon>
        <taxon>Tracheophyta</taxon>
        <taxon>Spermatophyta</taxon>
        <taxon>Magnoliopsida</taxon>
        <taxon>eudicotyledons</taxon>
        <taxon>Gunneridae</taxon>
        <taxon>Pentapetalae</taxon>
        <taxon>rosids</taxon>
        <taxon>malvids</taxon>
        <taxon>Brassicales</taxon>
        <taxon>Brassicaceae</taxon>
        <taxon>Camelineae</taxon>
        <taxon>Arabidopsis</taxon>
    </lineage>
</organism>
<sequence length="1229" mass="133234">MEEKTKTVPFYKLFSFSDSTDVLLMIVGSIGAIGNGVGFPLMTLLFGDLIDSIGQNQSNKDIVEIVSKVCLKFVYLGLGTLGAAFLQVACWMITGERQAARIRSLYLKTILRQDIGFFDVETSTGEVVGRMSGDTVLILEAMGEKVGKFIQLIATFVGGFVLAFVKGWLLTLVMLVSIPLLAIAGAAMPIIVTRASSREQAAYAKASTVVEQTLGSIRTVASFTGEKQAMKSYREFINLAYRASVKQGFSMGLGLGVVFFVFFCSYALAIWFGGEMILKKGYTGGEVVNVMVTVVASSMSLGQTTPCLTAFAAGKAAAYKMFETIERKPSIDAFDLNGKVLEDIRGEIELRDVCFSYPARPMEEVFGGFSLLIPSGATAALVGESGSGKSSVISLIERFYDPSSGSVLIDGVNLKEFQLKWIRGKIGLVSQEPVLFSSSIMENIGYGKENATVEEIQAAAKLANAANFIDKLPRGLETLVGEHGTQLSGGQKQRIAIARAILKDPRILLLDEATSALDAESERVVQEALDRVMMSRTTVIVAHRLSTVRNADMIAVIHRGKIVEEGSHSELLKDHEGAYAQLIRLQKIKKEPKRLESSNELRDRSINRGSSRNIRTRVHDDDSVSVLGLLGRQENTEISREQSRNVSITRIAALNKPETTILILGTLLGAVNGTIFPIFGILFAKVIEAFFKPPHDMKRDSRFWSMIFVLLGVASLIVYPMHTYLFAVAGGRLIQRIRVMCFEKVVHMEVGWFDDPENSSGTIGSRLSADAALIKTLVGDSLSLSVKNAAAAVSGLIIAFTASWKLAVIILVMIPLIGINGYLQIKFIKGFTADAKAKYEEASQVANDAVGSIRTVASFCAEEKVMEMYKKRCEDTIKSGIKQGLISGVGFGISFFVLYSVYASCFYVGARLVKAGRTNFNDVFQVFLALTMTAIGISQASSFAPDSSKAKGAAASIFGIIDGKSMIDSRDESGLVLENVKGDIELCHISFTYQTRPDVQIFRDLCFAIRAGQTVALVGESGSGKSTVISLLQRFYDPDSGHITLDRVELKKLQLKWVRQQMGLVGQEPVLFNDTIRSNIAYGKGGDEASEAEIIAAAELANAHGFISSIQQGYDTVVGERGIQLSGGQKQRVAIARAIVKEPKILLLDEATSALDAESERVVQDALDRVMVNRTTVVVAHRLSTIKNADVIAVVKNGVIVEKGTHETLINIEGGVYASLVQLHISASS</sequence>
<dbReference type="EMBL" id="Y15990">
    <property type="protein sequence ID" value="CAA75922.1"/>
    <property type="molecule type" value="Genomic_DNA"/>
</dbReference>
<dbReference type="EMBL" id="AC007138">
    <property type="protein sequence ID" value="AAD22644.1"/>
    <property type="molecule type" value="Genomic_DNA"/>
</dbReference>
<dbReference type="EMBL" id="AL161493">
    <property type="protein sequence ID" value="CAB80675.1"/>
    <property type="molecule type" value="Genomic_DNA"/>
</dbReference>
<dbReference type="EMBL" id="CP002687">
    <property type="protein sequence ID" value="AEE82081.1"/>
    <property type="molecule type" value="Genomic_DNA"/>
</dbReference>
<dbReference type="PIR" id="D85023">
    <property type="entry name" value="D85023"/>
</dbReference>
<dbReference type="PIR" id="T52319">
    <property type="entry name" value="T52319"/>
</dbReference>
<dbReference type="RefSeq" id="NP_192091.1">
    <property type="nucleotide sequence ID" value="NM_116412.2"/>
</dbReference>
<dbReference type="SMR" id="Q9SYI2"/>
<dbReference type="BioGRID" id="12248">
    <property type="interactions" value="1"/>
</dbReference>
<dbReference type="FunCoup" id="Q9SYI2">
    <property type="interactions" value="268"/>
</dbReference>
<dbReference type="STRING" id="3702.Q9SYI2"/>
<dbReference type="GlyCosmos" id="Q9SYI2">
    <property type="glycosylation" value="6 sites, No reported glycans"/>
</dbReference>
<dbReference type="GlyGen" id="Q9SYI2">
    <property type="glycosylation" value="6 sites"/>
</dbReference>
<dbReference type="iPTMnet" id="Q9SYI2"/>
<dbReference type="PaxDb" id="3702-AT4G01820.1"/>
<dbReference type="EnsemblPlants" id="AT4G01820.1">
    <property type="protein sequence ID" value="AT4G01820.1"/>
    <property type="gene ID" value="AT4G01820"/>
</dbReference>
<dbReference type="GeneID" id="826951"/>
<dbReference type="Gramene" id="AT4G01820.1">
    <property type="protein sequence ID" value="AT4G01820.1"/>
    <property type="gene ID" value="AT4G01820"/>
</dbReference>
<dbReference type="KEGG" id="ath:AT4G01820"/>
<dbReference type="Araport" id="AT4G01820"/>
<dbReference type="TAIR" id="AT4G01820">
    <property type="gene designation" value="ABCB3"/>
</dbReference>
<dbReference type="eggNOG" id="KOG0055">
    <property type="taxonomic scope" value="Eukaryota"/>
</dbReference>
<dbReference type="HOGENOM" id="CLU_000604_17_8_1"/>
<dbReference type="InParanoid" id="Q9SYI2"/>
<dbReference type="OMA" id="AKVIMSF"/>
<dbReference type="PhylomeDB" id="Q9SYI2"/>
<dbReference type="BioCyc" id="ARA:AT4G01820-MONOMER"/>
<dbReference type="PRO" id="PR:Q9SYI2"/>
<dbReference type="Proteomes" id="UP000006548">
    <property type="component" value="Chromosome 4"/>
</dbReference>
<dbReference type="ExpressionAtlas" id="Q9SYI2">
    <property type="expression patterns" value="baseline and differential"/>
</dbReference>
<dbReference type="GO" id="GO:0016020">
    <property type="term" value="C:membrane"/>
    <property type="evidence" value="ECO:0007669"/>
    <property type="project" value="UniProtKB-SubCell"/>
</dbReference>
<dbReference type="GO" id="GO:0140359">
    <property type="term" value="F:ABC-type transporter activity"/>
    <property type="evidence" value="ECO:0007669"/>
    <property type="project" value="InterPro"/>
</dbReference>
<dbReference type="GO" id="GO:0005524">
    <property type="term" value="F:ATP binding"/>
    <property type="evidence" value="ECO:0007669"/>
    <property type="project" value="UniProtKB-KW"/>
</dbReference>
<dbReference type="GO" id="GO:0016887">
    <property type="term" value="F:ATP hydrolysis activity"/>
    <property type="evidence" value="ECO:0007669"/>
    <property type="project" value="InterPro"/>
</dbReference>
<dbReference type="GO" id="GO:0042626">
    <property type="term" value="F:ATPase-coupled transmembrane transporter activity"/>
    <property type="evidence" value="ECO:0000250"/>
    <property type="project" value="TAIR"/>
</dbReference>
<dbReference type="CDD" id="cd18577">
    <property type="entry name" value="ABC_6TM_Pgp_ABCB1_D1_like"/>
    <property type="match status" value="1"/>
</dbReference>
<dbReference type="CDD" id="cd18578">
    <property type="entry name" value="ABC_6TM_Pgp_ABCB1_D2_like"/>
    <property type="match status" value="1"/>
</dbReference>
<dbReference type="CDD" id="cd03249">
    <property type="entry name" value="ABC_MTABC3_MDL1_MDL2"/>
    <property type="match status" value="2"/>
</dbReference>
<dbReference type="FunFam" id="1.20.1560.10:FF:000009">
    <property type="entry name" value="ABC transporter B family member 1"/>
    <property type="match status" value="1"/>
</dbReference>
<dbReference type="FunFam" id="3.40.50.300:FF:000066">
    <property type="entry name" value="ABC transporter B family member 1"/>
    <property type="match status" value="2"/>
</dbReference>
<dbReference type="FunFam" id="1.20.1560.10:FF:000044">
    <property type="entry name" value="ABC transporter B family member 9"/>
    <property type="match status" value="1"/>
</dbReference>
<dbReference type="Gene3D" id="1.20.1560.10">
    <property type="entry name" value="ABC transporter type 1, transmembrane domain"/>
    <property type="match status" value="1"/>
</dbReference>
<dbReference type="Gene3D" id="3.40.50.300">
    <property type="entry name" value="P-loop containing nucleotide triphosphate hydrolases"/>
    <property type="match status" value="2"/>
</dbReference>
<dbReference type="InterPro" id="IPR003593">
    <property type="entry name" value="AAA+_ATPase"/>
</dbReference>
<dbReference type="InterPro" id="IPR011527">
    <property type="entry name" value="ABC1_TM_dom"/>
</dbReference>
<dbReference type="InterPro" id="IPR036640">
    <property type="entry name" value="ABC1_TM_sf"/>
</dbReference>
<dbReference type="InterPro" id="IPR003439">
    <property type="entry name" value="ABC_transporter-like_ATP-bd"/>
</dbReference>
<dbReference type="InterPro" id="IPR017871">
    <property type="entry name" value="ABC_transporter-like_CS"/>
</dbReference>
<dbReference type="InterPro" id="IPR027417">
    <property type="entry name" value="P-loop_NTPase"/>
</dbReference>
<dbReference type="InterPro" id="IPR039421">
    <property type="entry name" value="Type_1_exporter"/>
</dbReference>
<dbReference type="PANTHER" id="PTHR43394:SF16">
    <property type="entry name" value="ABC TRANSPORTER B FAMILY MEMBER 4-LIKE ISOFORM X1"/>
    <property type="match status" value="1"/>
</dbReference>
<dbReference type="PANTHER" id="PTHR43394">
    <property type="entry name" value="ATP-DEPENDENT PERMEASE MDL1, MITOCHONDRIAL"/>
    <property type="match status" value="1"/>
</dbReference>
<dbReference type="Pfam" id="PF00664">
    <property type="entry name" value="ABC_membrane"/>
    <property type="match status" value="2"/>
</dbReference>
<dbReference type="Pfam" id="PF00005">
    <property type="entry name" value="ABC_tran"/>
    <property type="match status" value="2"/>
</dbReference>
<dbReference type="SMART" id="SM00382">
    <property type="entry name" value="AAA"/>
    <property type="match status" value="2"/>
</dbReference>
<dbReference type="SUPFAM" id="SSF90123">
    <property type="entry name" value="ABC transporter transmembrane region"/>
    <property type="match status" value="2"/>
</dbReference>
<dbReference type="SUPFAM" id="SSF52540">
    <property type="entry name" value="P-loop containing nucleoside triphosphate hydrolases"/>
    <property type="match status" value="2"/>
</dbReference>
<dbReference type="PROSITE" id="PS50929">
    <property type="entry name" value="ABC_TM1F"/>
    <property type="match status" value="2"/>
</dbReference>
<dbReference type="PROSITE" id="PS00211">
    <property type="entry name" value="ABC_TRANSPORTER_1"/>
    <property type="match status" value="2"/>
</dbReference>
<dbReference type="PROSITE" id="PS50893">
    <property type="entry name" value="ABC_TRANSPORTER_2"/>
    <property type="match status" value="2"/>
</dbReference>
<feature type="chain" id="PRO_0000227914" description="ABC transporter B family member 3">
    <location>
        <begin position="1"/>
        <end position="1229"/>
    </location>
</feature>
<feature type="transmembrane region" description="Helical" evidence="3">
    <location>
        <begin position="22"/>
        <end position="42"/>
    </location>
</feature>
<feature type="transmembrane region" description="Helical" evidence="3">
    <location>
        <begin position="73"/>
        <end position="93"/>
    </location>
</feature>
<feature type="transmembrane region" description="Helical" evidence="3">
    <location>
        <begin position="149"/>
        <end position="169"/>
    </location>
</feature>
<feature type="transmembrane region" description="Helical" evidence="3">
    <location>
        <begin position="172"/>
        <end position="192"/>
    </location>
</feature>
<feature type="transmembrane region" description="Helical" evidence="3">
    <location>
        <begin position="252"/>
        <end position="272"/>
    </location>
</feature>
<feature type="transmembrane region" description="Helical" evidence="3">
    <location>
        <begin position="281"/>
        <end position="301"/>
    </location>
</feature>
<feature type="transmembrane region" description="Helical" evidence="3">
    <location>
        <begin position="661"/>
        <end position="681"/>
    </location>
</feature>
<feature type="transmembrane region" description="Helical" evidence="3">
    <location>
        <begin position="706"/>
        <end position="726"/>
    </location>
</feature>
<feature type="transmembrane region" description="Helical" evidence="3">
    <location>
        <begin position="797"/>
        <end position="817"/>
    </location>
</feature>
<feature type="transmembrane region" description="Helical" evidence="3">
    <location>
        <begin position="888"/>
        <end position="908"/>
    </location>
</feature>
<feature type="transmembrane region" description="Helical" evidence="3">
    <location>
        <begin position="923"/>
        <end position="943"/>
    </location>
</feature>
<feature type="domain" description="ABC transmembrane type-1 1" evidence="3">
    <location>
        <begin position="25"/>
        <end position="313"/>
    </location>
</feature>
<feature type="domain" description="ABC transporter 1" evidence="2">
    <location>
        <begin position="348"/>
        <end position="584"/>
    </location>
</feature>
<feature type="domain" description="ABC transmembrane type-1 2" evidence="3">
    <location>
        <begin position="662"/>
        <end position="949"/>
    </location>
</feature>
<feature type="domain" description="ABC transporter 2" evidence="2">
    <location>
        <begin position="984"/>
        <end position="1222"/>
    </location>
</feature>
<feature type="region of interest" description="Disordered" evidence="4">
    <location>
        <begin position="594"/>
        <end position="614"/>
    </location>
</feature>
<feature type="compositionally biased region" description="Basic and acidic residues" evidence="4">
    <location>
        <begin position="594"/>
        <end position="606"/>
    </location>
</feature>
<feature type="binding site" evidence="2">
    <location>
        <begin position="383"/>
        <end position="390"/>
    </location>
    <ligand>
        <name>ATP</name>
        <dbReference type="ChEBI" id="CHEBI:30616"/>
        <label>1</label>
    </ligand>
</feature>
<feature type="binding site" evidence="2">
    <location>
        <begin position="1019"/>
        <end position="1026"/>
    </location>
    <ligand>
        <name>ATP</name>
        <dbReference type="ChEBI" id="CHEBI:30616"/>
        <label>2</label>
    </ligand>
</feature>
<feature type="glycosylation site" description="N-linked (GlcNAc...) asparagine" evidence="1">
    <location>
        <position position="56"/>
    </location>
</feature>
<feature type="glycosylation site" description="N-linked (GlcNAc...) asparagine" evidence="1">
    <location>
        <position position="450"/>
    </location>
</feature>
<feature type="glycosylation site" description="N-linked (GlcNAc...) asparagine" evidence="1">
    <location>
        <position position="645"/>
    </location>
</feature>
<feature type="glycosylation site" description="N-linked (GlcNAc...) asparagine" evidence="1">
    <location>
        <position position="758"/>
    </location>
</feature>
<feature type="glycosylation site" description="N-linked (GlcNAc...) asparagine" evidence="1">
    <location>
        <position position="1073"/>
    </location>
</feature>
<feature type="glycosylation site" description="N-linked (GlcNAc...) asparagine" evidence="1">
    <location>
        <position position="1173"/>
    </location>
</feature>
<feature type="sequence conflict" description="In Ref. 1; CAA75922." evidence="5" ref="1">
    <original>Q</original>
    <variation>E</variation>
    <location>
        <position position="87"/>
    </location>
</feature>
<keyword id="KW-0067">ATP-binding</keyword>
<keyword id="KW-0325">Glycoprotein</keyword>
<keyword id="KW-0472">Membrane</keyword>
<keyword id="KW-0547">Nucleotide-binding</keyword>
<keyword id="KW-1185">Reference proteome</keyword>
<keyword id="KW-0677">Repeat</keyword>
<keyword id="KW-0812">Transmembrane</keyword>
<keyword id="KW-1133">Transmembrane helix</keyword>
<keyword id="KW-0813">Transport</keyword>
<accession>Q9SYI2</accession>
<accession>O49749</accession>
<evidence type="ECO:0000255" key="1"/>
<evidence type="ECO:0000255" key="2">
    <source>
        <dbReference type="PROSITE-ProRule" id="PRU00434"/>
    </source>
</evidence>
<evidence type="ECO:0000255" key="3">
    <source>
        <dbReference type="PROSITE-ProRule" id="PRU00441"/>
    </source>
</evidence>
<evidence type="ECO:0000256" key="4">
    <source>
        <dbReference type="SAM" id="MobiDB-lite"/>
    </source>
</evidence>
<evidence type="ECO:0000305" key="5"/>
<proteinExistence type="inferred from homology"/>
<comment type="subcellular location">
    <subcellularLocation>
        <location evidence="3">Membrane</location>
        <topology evidence="3">Multi-pass membrane protein</topology>
    </subcellularLocation>
</comment>
<comment type="similarity">
    <text evidence="5">Belongs to the ABC transporter superfamily. ABCB family. Multidrug resistance exporter (TC 3.A.1.201) subfamily.</text>
</comment>
<gene>
    <name type="primary">ABCB3</name>
    <name type="synonym">MDR3</name>
    <name type="synonym">PGP3</name>
    <name type="ordered locus">At4g01820</name>
    <name type="ORF">T7B11.8</name>
</gene>
<name>AB3B_ARATH</name>